<protein>
    <recommendedName>
        <fullName evidence="1">Non-structural protein 1</fullName>
        <shortName evidence="1">NS1</shortName>
    </recommendedName>
    <alternativeName>
        <fullName evidence="1">NS1A</fullName>
    </alternativeName>
</protein>
<accession>Q809X2</accession>
<organismHost>
    <name type="scientific">Aves</name>
    <dbReference type="NCBI Taxonomy" id="8782"/>
</organismHost>
<organismHost>
    <name type="scientific">Felis catus</name>
    <name type="common">Cat</name>
    <name type="synonym">Felis silvestris catus</name>
    <dbReference type="NCBI Taxonomy" id="9685"/>
</organismHost>
<organismHost>
    <name type="scientific">Homo sapiens</name>
    <name type="common">Human</name>
    <dbReference type="NCBI Taxonomy" id="9606"/>
</organismHost>
<organismHost>
    <name type="scientific">Panthera pardus</name>
    <name type="common">Leopard</name>
    <name type="synonym">Felis pardus</name>
    <dbReference type="NCBI Taxonomy" id="9691"/>
</organismHost>
<organismHost>
    <name type="scientific">Panthera tigris</name>
    <name type="common">Tiger</name>
    <dbReference type="NCBI Taxonomy" id="9694"/>
</organismHost>
<organismHost>
    <name type="scientific">Sus scrofa</name>
    <name type="common">Pig</name>
    <dbReference type="NCBI Taxonomy" id="9823"/>
</organismHost>
<feature type="chain" id="PRO_0000311746" description="Non-structural protein 1">
    <location>
        <begin position="1"/>
        <end position="225"/>
    </location>
</feature>
<feature type="region of interest" description="RNA-binding and homodimerization" evidence="1">
    <location>
        <begin position="1"/>
        <end position="73"/>
    </location>
</feature>
<feature type="region of interest" description="CPSF4-binding" evidence="1">
    <location>
        <begin position="175"/>
        <end position="210"/>
    </location>
</feature>
<feature type="region of interest" description="Disordered" evidence="2">
    <location>
        <begin position="200"/>
        <end position="225"/>
    </location>
</feature>
<feature type="region of interest" description="PABPN1-binding" evidence="1">
    <location>
        <begin position="218"/>
        <end position="225"/>
    </location>
</feature>
<feature type="short sequence motif" description="Nuclear localization signal" evidence="1">
    <location>
        <begin position="34"/>
        <end position="38"/>
    </location>
</feature>
<feature type="short sequence motif" description="Nuclear export signal" evidence="1">
    <location>
        <begin position="132"/>
        <end position="141"/>
    </location>
</feature>
<name>NS1_I01A3</name>
<proteinExistence type="inferred from homology"/>
<keyword id="KW-0025">Alternative splicing</keyword>
<keyword id="KW-1262">Eukaryotic host gene expression shutoff by virus</keyword>
<keyword id="KW-1035">Host cytoplasm</keyword>
<keyword id="KW-1190">Host gene expression shutoff by virus</keyword>
<keyword id="KW-1192">Host mRNA suppression by virus</keyword>
<keyword id="KW-1048">Host nucleus</keyword>
<keyword id="KW-0945">Host-virus interaction</keyword>
<keyword id="KW-1090">Inhibition of host innate immune response by virus</keyword>
<keyword id="KW-1114">Inhibition of host interferon signaling pathway by virus</keyword>
<keyword id="KW-1102">Inhibition of host PKR by virus</keyword>
<keyword id="KW-1103">Inhibition of host pre-mRNA processing by virus</keyword>
<keyword id="KW-1088">Inhibition of host RIG-I by virus</keyword>
<keyword id="KW-1113">Inhibition of host RLR pathway by virus</keyword>
<keyword id="KW-0922">Interferon antiviral system evasion</keyword>
<keyword id="KW-0694">RNA-binding</keyword>
<keyword id="KW-0832">Ubl conjugation</keyword>
<keyword id="KW-0899">Viral immunoevasion</keyword>
<comment type="function">
    <text evidence="1">Inhibits post-transcriptional processing of cellular pre-mRNA, by binding and inhibiting two cellular proteins that are required for the 3'-end processing of cellular pre-mRNAs: the 30 kDa cleavage and polyadenylation specificity factor/CPSF4 and the poly(A)-binding protein 2/PABPN1. In turn, unprocessed 3' end pre-mRNAs accumulate in the host nucleus and are no longer exported to the cytoplasm. Cellular protein synthesis is thereby shut off very early after virus infection. Viral protein synthesis is not affected by the inhibition of the cellular 3' end processing machinery because the poly(A) tails of viral mRNAs are produced by the viral polymerase through a stuttering mechanism. Prevents the establishment of the cellular antiviral state by inhibiting TRIM25-mediated RIGI ubiquitination, which normally triggers the antiviral transduction signal that leads to the activation of type I IFN genes by transcription factors IRF3 and IRF7. Also binds poly(A) and U6 snRNA. Inhibits the integrated stress response (ISR) in the infected cell by blocking dsRNA binding by EIF2AK2/PKR and further phosphorylation of EIF2S1/EIF-2ALPHA. Stress granule formation is thus inhibited, which allows protein synthesis and viral replication.</text>
</comment>
<comment type="subunit">
    <text evidence="1">Homodimer. Interacts with host TRIM25 (via coiled coil); this interaction specifically inhibits TRIM25 multimerization and TRIM25-mediated RIGI CARD ubiquitination. Interacts with human EIF2AK2/PKR, CPSF4, IVNS1ABP and PABPN1.</text>
</comment>
<comment type="subcellular location">
    <subcellularLocation>
        <location evidence="1">Host nucleus</location>
    </subcellularLocation>
    <subcellularLocation>
        <location evidence="1">Host cytoplasm</location>
    </subcellularLocation>
    <text evidence="1">In uninfected, transfected cells, NS1 is localized in the nucleus. Only in virus infected cells, the nuclear export signal is unveiled, presumably by a viral protein, and a fraction of NS1 is exported in the cytoplasm.</text>
</comment>
<comment type="alternative products">
    <event type="alternative splicing"/>
    <isoform>
        <id>Q809X2-1</id>
        <name>NS1</name>
        <sequence type="displayed"/>
    </isoform>
    <isoform>
        <id>P0C5U1-1</id>
        <name>NEP</name>
        <name>NS2</name>
        <sequence type="external"/>
    </isoform>
</comment>
<comment type="domain">
    <text evidence="1">The dsRNA-binding region is required for suppression of RNA silencing.</text>
</comment>
<comment type="PTM">
    <text evidence="1">Upon interferon induction, ISGylated via host HERC5; this results in the impairment of NS1 interaction with RNA targets due to its inability to form homodimers and to interact with host EIF2AK2/PKR.</text>
</comment>
<comment type="similarity">
    <text evidence="1">Belongs to the influenza A viruses NS1 family.</text>
</comment>
<evidence type="ECO:0000255" key="1">
    <source>
        <dbReference type="HAMAP-Rule" id="MF_04066"/>
    </source>
</evidence>
<evidence type="ECO:0000256" key="2">
    <source>
        <dbReference type="SAM" id="MobiDB-lite"/>
    </source>
</evidence>
<dbReference type="EMBL" id="AF509075">
    <property type="protein sequence ID" value="AAO52918.1"/>
    <property type="molecule type" value="Genomic_DNA"/>
</dbReference>
<dbReference type="SMR" id="Q809X2"/>
<dbReference type="GO" id="GO:0030430">
    <property type="term" value="C:host cell cytoplasm"/>
    <property type="evidence" value="ECO:0007669"/>
    <property type="project" value="UniProtKB-SubCell"/>
</dbReference>
<dbReference type="GO" id="GO:0042025">
    <property type="term" value="C:host cell nucleus"/>
    <property type="evidence" value="ECO:0007669"/>
    <property type="project" value="UniProtKB-SubCell"/>
</dbReference>
<dbReference type="GO" id="GO:0030291">
    <property type="term" value="F:protein serine/threonine kinase inhibitor activity"/>
    <property type="evidence" value="ECO:0007669"/>
    <property type="project" value="UniProtKB-KW"/>
</dbReference>
<dbReference type="GO" id="GO:0003723">
    <property type="term" value="F:RNA binding"/>
    <property type="evidence" value="ECO:0007669"/>
    <property type="project" value="UniProtKB-KW"/>
</dbReference>
<dbReference type="GO" id="GO:0039540">
    <property type="term" value="P:symbiont-mediated suppression of host cytoplasmic pattern recognition receptor signaling pathway via inhibition of RIG-I activity"/>
    <property type="evidence" value="ECO:0007669"/>
    <property type="project" value="UniProtKB-KW"/>
</dbReference>
<dbReference type="GO" id="GO:0039657">
    <property type="term" value="P:symbiont-mediated suppression of host gene expression"/>
    <property type="evidence" value="ECO:0007669"/>
    <property type="project" value="UniProtKB-KW"/>
</dbReference>
<dbReference type="GO" id="GO:0039524">
    <property type="term" value="P:symbiont-mediated suppression of host mRNA processing"/>
    <property type="evidence" value="ECO:0007669"/>
    <property type="project" value="UniProtKB-KW"/>
</dbReference>
<dbReference type="GO" id="GO:0039580">
    <property type="term" value="P:symbiont-mediated suppression of host PKR/eIFalpha signaling"/>
    <property type="evidence" value="ECO:0007669"/>
    <property type="project" value="UniProtKB-KW"/>
</dbReference>
<dbReference type="GO" id="GO:0039502">
    <property type="term" value="P:symbiont-mediated suppression of host type I interferon-mediated signaling pathway"/>
    <property type="evidence" value="ECO:0007669"/>
    <property type="project" value="UniProtKB-KW"/>
</dbReference>
<dbReference type="FunFam" id="1.10.287.10:FF:000001">
    <property type="entry name" value="Non-structural protein 1"/>
    <property type="match status" value="1"/>
</dbReference>
<dbReference type="FunFam" id="3.30.420.330:FF:000001">
    <property type="entry name" value="Non-structural protein 1"/>
    <property type="match status" value="1"/>
</dbReference>
<dbReference type="Gene3D" id="3.30.420.330">
    <property type="entry name" value="Influenza virus non-structural protein, effector domain"/>
    <property type="match status" value="1"/>
</dbReference>
<dbReference type="Gene3D" id="1.10.287.10">
    <property type="entry name" value="S15/NS1, RNA-binding"/>
    <property type="match status" value="1"/>
</dbReference>
<dbReference type="HAMAP" id="MF_04066">
    <property type="entry name" value="INFV_NS1"/>
    <property type="match status" value="1"/>
</dbReference>
<dbReference type="InterPro" id="IPR004208">
    <property type="entry name" value="NS1"/>
</dbReference>
<dbReference type="InterPro" id="IPR000256">
    <property type="entry name" value="NS1A"/>
</dbReference>
<dbReference type="InterPro" id="IPR038064">
    <property type="entry name" value="NS1A_effect_dom-like_sf"/>
</dbReference>
<dbReference type="InterPro" id="IPR009068">
    <property type="entry name" value="uS15_NS1_RNA-bd_sf"/>
</dbReference>
<dbReference type="Pfam" id="PF00600">
    <property type="entry name" value="Flu_NS1"/>
    <property type="match status" value="1"/>
</dbReference>
<dbReference type="SUPFAM" id="SSF143021">
    <property type="entry name" value="Ns1 effector domain-like"/>
    <property type="match status" value="1"/>
</dbReference>
<dbReference type="SUPFAM" id="SSF47060">
    <property type="entry name" value="S15/NS1 RNA-binding domain"/>
    <property type="match status" value="1"/>
</dbReference>
<gene>
    <name evidence="1" type="primary">NS</name>
</gene>
<organism>
    <name type="scientific">Influenza A virus (strain A/Chicken/Hong Kong/715.5/2001 H5N1 genotype E)</name>
    <dbReference type="NCBI Taxonomy" id="196434"/>
    <lineage>
        <taxon>Viruses</taxon>
        <taxon>Riboviria</taxon>
        <taxon>Orthornavirae</taxon>
        <taxon>Negarnaviricota</taxon>
        <taxon>Polyploviricotina</taxon>
        <taxon>Insthoviricetes</taxon>
        <taxon>Articulavirales</taxon>
        <taxon>Orthomyxoviridae</taxon>
        <taxon>Alphainfluenzavirus</taxon>
        <taxon>Alphainfluenzavirus influenzae</taxon>
        <taxon>Influenza A virus</taxon>
    </lineage>
</organism>
<sequence length="225" mass="25669">MDSNTVSSFQVDCFLWHVRKRFADRELGDAPFLDRLRRDQKSLRGRGNTLGLDIETATRAGKQIVERILEEESDEALKMPAPRYLTDMTLEEMSRDWFMLMPKQKVAGSLCIKMDQAIMDKNIILKANFSVFFDRLETLILLRAFTEEGAIVGEISPLPSLPGHTDEDVKNAIGVLIGGLEWNDNTVRVSETLQRFAWRSSDEDGRPPLPPNQKRKMARTIESEV</sequence>
<reference key="1">
    <citation type="journal article" date="2002" name="Proc. Natl. Acad. Sci. U.S.A.">
        <title>Emergence of multiple genotypes of H5N1 avian influenza viruses in Hong Kong SAR.</title>
        <authorList>
            <person name="Guan Y."/>
            <person name="Peiris J.S.M."/>
            <person name="Lipatov A.S."/>
            <person name="Ellis T.M."/>
            <person name="Dyrting K.C."/>
            <person name="Krauss S."/>
            <person name="Zhang L.J."/>
            <person name="Webster R.G."/>
            <person name="Shortridge K.F."/>
        </authorList>
    </citation>
    <scope>NUCLEOTIDE SEQUENCE [GENOMIC RNA]</scope>
</reference>